<reference key="1">
    <citation type="journal article" date="2006" name="J. Bacteriol.">
        <title>Genome sequence of Aeromonas hydrophila ATCC 7966T: jack of all trades.</title>
        <authorList>
            <person name="Seshadri R."/>
            <person name="Joseph S.W."/>
            <person name="Chopra A.K."/>
            <person name="Sha J."/>
            <person name="Shaw J."/>
            <person name="Graf J."/>
            <person name="Haft D.H."/>
            <person name="Wu M."/>
            <person name="Ren Q."/>
            <person name="Rosovitz M.J."/>
            <person name="Madupu R."/>
            <person name="Tallon L."/>
            <person name="Kim M."/>
            <person name="Jin S."/>
            <person name="Vuong H."/>
            <person name="Stine O.C."/>
            <person name="Ali A."/>
            <person name="Horneman A.J."/>
            <person name="Heidelberg J.F."/>
        </authorList>
    </citation>
    <scope>NUCLEOTIDE SEQUENCE [LARGE SCALE GENOMIC DNA]</scope>
    <source>
        <strain>ATCC 7966 / DSM 30187 / BCRC 13018 / CCUG 14551 / JCM 1027 / KCTC 2358 / NCIMB 9240 / NCTC 8049</strain>
    </source>
</reference>
<reference evidence="5" key="2">
    <citation type="journal article" date="2014" name="Acta Crystallogr. D">
        <title>Structural basis for the broad specificity of a new family of amino-acid racemases.</title>
        <authorList>
            <person name="Espaillat A."/>
            <person name="Carrasco-Lopez C."/>
            <person name="Bernardo-Garcia N."/>
            <person name="Pietrosemoli N."/>
            <person name="Otero L.H."/>
            <person name="Alvarez L."/>
            <person name="de Pedro M.A."/>
            <person name="Pazos F."/>
            <person name="Davis B.M."/>
            <person name="Waldor M.K."/>
            <person name="Hermoso J.A."/>
            <person name="Cava F."/>
        </authorList>
    </citation>
    <scope>X-RAY CRYSTALLOGRAPHY (3.25 ANGSTROMS)</scope>
    <scope>FUNCTION</scope>
</reference>
<evidence type="ECO:0000255" key="1">
    <source>
        <dbReference type="HAMAP-Rule" id="MF_01201"/>
    </source>
</evidence>
<evidence type="ECO:0000303" key="2">
    <source>
    </source>
</evidence>
<evidence type="ECO:0000305" key="3">
    <source>
    </source>
</evidence>
<evidence type="ECO:0000312" key="4">
    <source>
        <dbReference type="EMBL" id="ABK36160.1"/>
    </source>
</evidence>
<evidence type="ECO:0007744" key="5">
    <source>
        <dbReference type="PDB" id="4BHY"/>
    </source>
</evidence>
<evidence type="ECO:0007829" key="6">
    <source>
        <dbReference type="PDB" id="4BHY"/>
    </source>
</evidence>
<gene>
    <name evidence="4" type="primary">alr-1</name>
    <name evidence="4" type="ordered locus">AHA_1015</name>
</gene>
<proteinExistence type="evidence at protein level"/>
<keyword id="KW-0002">3D-structure</keyword>
<keyword id="KW-0413">Isomerase</keyword>
<keyword id="KW-0663">Pyridoxal phosphate</keyword>
<keyword id="KW-1185">Reference proteome</keyword>
<protein>
    <recommendedName>
        <fullName evidence="1 2">Alanine racemase</fullName>
        <ecNumber evidence="1">5.1.1.1</ecNumber>
    </recommendedName>
</protein>
<comment type="function">
    <text evidence="3">Catalyzes the interconversion of L-alanine and D-alanine. Likely plays an important role in supplying D-alanine, which is an indispensable constituent in the biosynthesis of bacterial cell-wall peptidoglycan.</text>
</comment>
<comment type="catalytic activity">
    <reaction evidence="1">
        <text>L-alanine = D-alanine</text>
        <dbReference type="Rhea" id="RHEA:20249"/>
        <dbReference type="ChEBI" id="CHEBI:57416"/>
        <dbReference type="ChEBI" id="CHEBI:57972"/>
        <dbReference type="EC" id="5.1.1.1"/>
    </reaction>
</comment>
<comment type="cofactor">
    <cofactor evidence="1">
        <name>pyridoxal 5'-phosphate</name>
        <dbReference type="ChEBI" id="CHEBI:597326"/>
    </cofactor>
</comment>
<comment type="pathway">
    <text evidence="1">Amino-acid biosynthesis; D-alanine biosynthesis; D-alanine from L-alanine: step 1/1.</text>
</comment>
<comment type="similarity">
    <text evidence="1">Belongs to the alanine racemase family.</text>
</comment>
<accession>A0KH11</accession>
<name>ALR_AERHH</name>
<feature type="chain" id="PRO_0000446937" description="Alanine racemase">
    <location>
        <begin position="1"/>
        <end position="357"/>
    </location>
</feature>
<feature type="active site" description="Proton acceptor; specific for D-alanine" evidence="1">
    <location>
        <position position="34"/>
    </location>
</feature>
<feature type="active site" description="Proton acceptor; specific for L-alanine" evidence="1">
    <location>
        <position position="254"/>
    </location>
</feature>
<feature type="binding site" evidence="1">
    <location>
        <position position="129"/>
    </location>
    <ligand>
        <name>substrate</name>
    </ligand>
</feature>
<feature type="binding site" evidence="1">
    <location>
        <position position="302"/>
    </location>
    <ligand>
        <name>substrate</name>
    </ligand>
</feature>
<feature type="modified residue" description="N6-(pyridoxal phosphate)lysine" evidence="1">
    <location>
        <position position="34"/>
    </location>
</feature>
<feature type="strand" evidence="6">
    <location>
        <begin position="3"/>
        <end position="9"/>
    </location>
</feature>
<feature type="helix" evidence="6">
    <location>
        <begin position="10"/>
        <end position="23"/>
    </location>
</feature>
<feature type="strand" evidence="6">
    <location>
        <begin position="30"/>
        <end position="32"/>
    </location>
</feature>
<feature type="helix" evidence="6">
    <location>
        <begin position="35"/>
        <end position="39"/>
    </location>
</feature>
<feature type="helix" evidence="6">
    <location>
        <begin position="42"/>
        <end position="48"/>
    </location>
</feature>
<feature type="strand" evidence="6">
    <location>
        <begin position="53"/>
        <end position="59"/>
    </location>
</feature>
<feature type="helix" evidence="6">
    <location>
        <begin position="60"/>
        <end position="67"/>
    </location>
</feature>
<feature type="turn" evidence="6">
    <location>
        <begin position="68"/>
        <end position="70"/>
    </location>
</feature>
<feature type="strand" evidence="6">
    <location>
        <begin position="75"/>
        <end position="77"/>
    </location>
</feature>
<feature type="helix" evidence="6">
    <location>
        <begin position="84"/>
        <end position="86"/>
    </location>
</feature>
<feature type="helix" evidence="6">
    <location>
        <begin position="88"/>
        <end position="93"/>
    </location>
</feature>
<feature type="strand" evidence="6">
    <location>
        <begin position="95"/>
        <end position="98"/>
    </location>
</feature>
<feature type="helix" evidence="6">
    <location>
        <begin position="102"/>
        <end position="110"/>
    </location>
</feature>
<feature type="strand" evidence="6">
    <location>
        <begin position="119"/>
        <end position="121"/>
    </location>
</feature>
<feature type="helix" evidence="6">
    <location>
        <begin position="141"/>
        <end position="145"/>
    </location>
</feature>
<feature type="strand" evidence="6">
    <location>
        <begin position="148"/>
        <end position="150"/>
    </location>
</feature>
<feature type="helix" evidence="6">
    <location>
        <begin position="177"/>
        <end position="181"/>
    </location>
</feature>
<feature type="strand" evidence="6">
    <location>
        <begin position="182"/>
        <end position="185"/>
    </location>
</feature>
<feature type="turn" evidence="6">
    <location>
        <begin position="213"/>
        <end position="216"/>
    </location>
</feature>
<feature type="strand" evidence="6">
    <location>
        <begin position="233"/>
        <end position="237"/>
    </location>
</feature>
<feature type="strand" evidence="6">
    <location>
        <begin position="240"/>
        <end position="245"/>
    </location>
</feature>
<feature type="strand" evidence="6">
    <location>
        <begin position="265"/>
        <end position="270"/>
    </location>
</feature>
<feature type="turn" evidence="6">
    <location>
        <begin position="273"/>
        <end position="276"/>
    </location>
</feature>
<feature type="strand" evidence="6">
    <location>
        <begin position="285"/>
        <end position="289"/>
    </location>
</feature>
<feature type="strand" evidence="6">
    <location>
        <begin position="292"/>
        <end position="300"/>
    </location>
</feature>
<feature type="strand" evidence="6">
    <location>
        <begin position="305"/>
        <end position="308"/>
    </location>
</feature>
<feature type="strand" evidence="6">
    <location>
        <begin position="322"/>
        <end position="328"/>
    </location>
</feature>
<feature type="helix" evidence="6">
    <location>
        <begin position="330"/>
        <end position="337"/>
    </location>
</feature>
<feature type="helix" evidence="6">
    <location>
        <begin position="341"/>
        <end position="344"/>
    </location>
</feature>
<feature type="strand" evidence="6">
    <location>
        <begin position="352"/>
        <end position="357"/>
    </location>
</feature>
<organism>
    <name type="scientific">Aeromonas hydrophila subsp. hydrophila (strain ATCC 7966 / DSM 30187 / BCRC 13018 / CCUG 14551 / JCM 1027 / KCTC 2358 / NCIMB 9240 / NCTC 8049)</name>
    <dbReference type="NCBI Taxonomy" id="380703"/>
    <lineage>
        <taxon>Bacteria</taxon>
        <taxon>Pseudomonadati</taxon>
        <taxon>Pseudomonadota</taxon>
        <taxon>Gammaproteobacteria</taxon>
        <taxon>Aeromonadales</taxon>
        <taxon>Aeromonadaceae</taxon>
        <taxon>Aeromonas</taxon>
    </lineage>
</organism>
<sequence length="357" mass="38774">MKAAIAQINTAALRHNLAVVKRHAPQCKIIAVVKANAYGHGLLPVARTLVDADAYAVARIEEALMLRSCAVVKPIVLLEGFFSAADLPVLAANNLQTAVHTWEQLEALEQADLPAPVVAWLKLDTGMHRLGVRADEMPAFIERLAKCKNVVQPFNIMTHFSRSDELEQPTTREQIDLFSQLTAPLLGERAMANSAGILAWPDSHCDWVRPGVILYGVSPFPNTVAADYDLQPVMTLKTQLIAVRDHKAGEPVGYGANWVSDRDTRLGVIAIGYGDGYPRMAPNGTPVLVNGRIVPLVGRVSMDMTTVDLGPGATDKAGDEAVLWGEGLPVERVADQIGTIPYELITKLTSRVFMEYV</sequence>
<dbReference type="EC" id="5.1.1.1" evidence="1"/>
<dbReference type="EMBL" id="CP000462">
    <property type="protein sequence ID" value="ABK36160.1"/>
    <property type="molecule type" value="Genomic_DNA"/>
</dbReference>
<dbReference type="RefSeq" id="WP_011704949.1">
    <property type="nucleotide sequence ID" value="NC_008570.1"/>
</dbReference>
<dbReference type="RefSeq" id="YP_855561.1">
    <property type="nucleotide sequence ID" value="NC_008570.1"/>
</dbReference>
<dbReference type="PDB" id="4BHY">
    <property type="method" value="X-ray"/>
    <property type="resolution" value="3.25 A"/>
    <property type="chains" value="A/B/C/D=1-357"/>
</dbReference>
<dbReference type="PDBsum" id="4BHY"/>
<dbReference type="SMR" id="A0KH11"/>
<dbReference type="STRING" id="380703.AHA_1015"/>
<dbReference type="EnsemblBacteria" id="ABK36160">
    <property type="protein sequence ID" value="ABK36160"/>
    <property type="gene ID" value="AHA_1015"/>
</dbReference>
<dbReference type="GeneID" id="4488780"/>
<dbReference type="KEGG" id="aha:AHA_1015"/>
<dbReference type="PATRIC" id="fig|380703.7.peg.1019"/>
<dbReference type="eggNOG" id="COG0787">
    <property type="taxonomic scope" value="Bacteria"/>
</dbReference>
<dbReference type="HOGENOM" id="CLU_028393_1_0_6"/>
<dbReference type="OrthoDB" id="9813814at2"/>
<dbReference type="UniPathway" id="UPA00042">
    <property type="reaction ID" value="UER00497"/>
</dbReference>
<dbReference type="EvolutionaryTrace" id="A0KH11"/>
<dbReference type="Proteomes" id="UP000000756">
    <property type="component" value="Chromosome"/>
</dbReference>
<dbReference type="GO" id="GO:0005829">
    <property type="term" value="C:cytosol"/>
    <property type="evidence" value="ECO:0007669"/>
    <property type="project" value="TreeGrafter"/>
</dbReference>
<dbReference type="GO" id="GO:0008784">
    <property type="term" value="F:alanine racemase activity"/>
    <property type="evidence" value="ECO:0007669"/>
    <property type="project" value="UniProtKB-UniRule"/>
</dbReference>
<dbReference type="GO" id="GO:0030170">
    <property type="term" value="F:pyridoxal phosphate binding"/>
    <property type="evidence" value="ECO:0007669"/>
    <property type="project" value="UniProtKB-UniRule"/>
</dbReference>
<dbReference type="GO" id="GO:0030632">
    <property type="term" value="P:D-alanine biosynthetic process"/>
    <property type="evidence" value="ECO:0007669"/>
    <property type="project" value="UniProtKB-UniRule"/>
</dbReference>
<dbReference type="CDD" id="cd06827">
    <property type="entry name" value="PLPDE_III_AR_proteobact"/>
    <property type="match status" value="1"/>
</dbReference>
<dbReference type="FunFam" id="2.40.37.10:FF:000002">
    <property type="entry name" value="Alanine racemase"/>
    <property type="match status" value="1"/>
</dbReference>
<dbReference type="FunFam" id="3.20.20.10:FF:000002">
    <property type="entry name" value="Alanine racemase"/>
    <property type="match status" value="1"/>
</dbReference>
<dbReference type="Gene3D" id="3.20.20.10">
    <property type="entry name" value="Alanine racemase"/>
    <property type="match status" value="1"/>
</dbReference>
<dbReference type="Gene3D" id="2.40.37.10">
    <property type="entry name" value="Lyase, Ornithine Decarboxylase, Chain A, domain 1"/>
    <property type="match status" value="1"/>
</dbReference>
<dbReference type="HAMAP" id="MF_01201">
    <property type="entry name" value="Ala_racemase"/>
    <property type="match status" value="1"/>
</dbReference>
<dbReference type="InterPro" id="IPR000821">
    <property type="entry name" value="Ala_racemase"/>
</dbReference>
<dbReference type="InterPro" id="IPR009006">
    <property type="entry name" value="Ala_racemase/Decarboxylase_C"/>
</dbReference>
<dbReference type="InterPro" id="IPR011079">
    <property type="entry name" value="Ala_racemase_C"/>
</dbReference>
<dbReference type="InterPro" id="IPR001608">
    <property type="entry name" value="Ala_racemase_N"/>
</dbReference>
<dbReference type="InterPro" id="IPR020622">
    <property type="entry name" value="Ala_racemase_pyridoxalP-BS"/>
</dbReference>
<dbReference type="InterPro" id="IPR029066">
    <property type="entry name" value="PLP-binding_barrel"/>
</dbReference>
<dbReference type="NCBIfam" id="TIGR00492">
    <property type="entry name" value="alr"/>
    <property type="match status" value="1"/>
</dbReference>
<dbReference type="PANTHER" id="PTHR30511">
    <property type="entry name" value="ALANINE RACEMASE"/>
    <property type="match status" value="1"/>
</dbReference>
<dbReference type="PANTHER" id="PTHR30511:SF4">
    <property type="entry name" value="ALANINE RACEMASE, BIOSYNTHETIC"/>
    <property type="match status" value="1"/>
</dbReference>
<dbReference type="Pfam" id="PF00842">
    <property type="entry name" value="Ala_racemase_C"/>
    <property type="match status" value="1"/>
</dbReference>
<dbReference type="Pfam" id="PF01168">
    <property type="entry name" value="Ala_racemase_N"/>
    <property type="match status" value="1"/>
</dbReference>
<dbReference type="PRINTS" id="PR00992">
    <property type="entry name" value="ALARACEMASE"/>
</dbReference>
<dbReference type="SMART" id="SM01005">
    <property type="entry name" value="Ala_racemase_C"/>
    <property type="match status" value="1"/>
</dbReference>
<dbReference type="SUPFAM" id="SSF50621">
    <property type="entry name" value="Alanine racemase C-terminal domain-like"/>
    <property type="match status" value="1"/>
</dbReference>
<dbReference type="SUPFAM" id="SSF51419">
    <property type="entry name" value="PLP-binding barrel"/>
    <property type="match status" value="1"/>
</dbReference>
<dbReference type="PROSITE" id="PS00395">
    <property type="entry name" value="ALANINE_RACEMASE"/>
    <property type="match status" value="1"/>
</dbReference>